<name>PHO85_DEBHA</name>
<reference key="1">
    <citation type="journal article" date="2004" name="Nature">
        <title>Genome evolution in yeasts.</title>
        <authorList>
            <person name="Dujon B."/>
            <person name="Sherman D."/>
            <person name="Fischer G."/>
            <person name="Durrens P."/>
            <person name="Casaregola S."/>
            <person name="Lafontaine I."/>
            <person name="de Montigny J."/>
            <person name="Marck C."/>
            <person name="Neuveglise C."/>
            <person name="Talla E."/>
            <person name="Goffard N."/>
            <person name="Frangeul L."/>
            <person name="Aigle M."/>
            <person name="Anthouard V."/>
            <person name="Babour A."/>
            <person name="Barbe V."/>
            <person name="Barnay S."/>
            <person name="Blanchin S."/>
            <person name="Beckerich J.-M."/>
            <person name="Beyne E."/>
            <person name="Bleykasten C."/>
            <person name="Boisrame A."/>
            <person name="Boyer J."/>
            <person name="Cattolico L."/>
            <person name="Confanioleri F."/>
            <person name="de Daruvar A."/>
            <person name="Despons L."/>
            <person name="Fabre E."/>
            <person name="Fairhead C."/>
            <person name="Ferry-Dumazet H."/>
            <person name="Groppi A."/>
            <person name="Hantraye F."/>
            <person name="Hennequin C."/>
            <person name="Jauniaux N."/>
            <person name="Joyet P."/>
            <person name="Kachouri R."/>
            <person name="Kerrest A."/>
            <person name="Koszul R."/>
            <person name="Lemaire M."/>
            <person name="Lesur I."/>
            <person name="Ma L."/>
            <person name="Muller H."/>
            <person name="Nicaud J.-M."/>
            <person name="Nikolski M."/>
            <person name="Oztas S."/>
            <person name="Ozier-Kalogeropoulos O."/>
            <person name="Pellenz S."/>
            <person name="Potier S."/>
            <person name="Richard G.-F."/>
            <person name="Straub M.-L."/>
            <person name="Suleau A."/>
            <person name="Swennen D."/>
            <person name="Tekaia F."/>
            <person name="Wesolowski-Louvel M."/>
            <person name="Westhof E."/>
            <person name="Wirth B."/>
            <person name="Zeniou-Meyer M."/>
            <person name="Zivanovic Y."/>
            <person name="Bolotin-Fukuhara M."/>
            <person name="Thierry A."/>
            <person name="Bouchier C."/>
            <person name="Caudron B."/>
            <person name="Scarpelli C."/>
            <person name="Gaillardin C."/>
            <person name="Weissenbach J."/>
            <person name="Wincker P."/>
            <person name="Souciet J.-L."/>
        </authorList>
    </citation>
    <scope>NUCLEOTIDE SEQUENCE [LARGE SCALE GENOMIC DNA]</scope>
    <source>
        <strain>ATCC 36239 / CBS 767 / BCRC 21394 / JCM 1990 / NBRC 0083 / IGC 2968</strain>
    </source>
</reference>
<feature type="chain" id="PRO_0000086518" description="Negative regulator of the PHO system">
    <location>
        <begin position="1"/>
        <end position="330"/>
    </location>
</feature>
<feature type="domain" description="Protein kinase" evidence="2">
    <location>
        <begin position="8"/>
        <end position="290"/>
    </location>
</feature>
<feature type="region of interest" description="Disordered" evidence="4">
    <location>
        <begin position="300"/>
        <end position="330"/>
    </location>
</feature>
<feature type="compositionally biased region" description="Low complexity" evidence="4">
    <location>
        <begin position="308"/>
        <end position="323"/>
    </location>
</feature>
<feature type="active site" description="Proton acceptor" evidence="2 3">
    <location>
        <position position="131"/>
    </location>
</feature>
<feature type="binding site" evidence="2">
    <location>
        <begin position="14"/>
        <end position="22"/>
    </location>
    <ligand>
        <name>ATP</name>
        <dbReference type="ChEBI" id="CHEBI:30616"/>
    </ligand>
</feature>
<feature type="binding site" evidence="2">
    <location>
        <position position="37"/>
    </location>
    <ligand>
        <name>ATP</name>
        <dbReference type="ChEBI" id="CHEBI:30616"/>
    </ligand>
</feature>
<gene>
    <name type="primary">PHO85</name>
    <name type="ordered locus">DEHA2D12980g</name>
</gene>
<comment type="function">
    <text evidence="1">When phosphate concentrations are high it phosphorylates the PHO4 transcription factor thus establishing repression.</text>
</comment>
<comment type="catalytic activity">
    <reaction>
        <text>L-seryl-[protein] + ATP = O-phospho-L-seryl-[protein] + ADP + H(+)</text>
        <dbReference type="Rhea" id="RHEA:17989"/>
        <dbReference type="Rhea" id="RHEA-COMP:9863"/>
        <dbReference type="Rhea" id="RHEA-COMP:11604"/>
        <dbReference type="ChEBI" id="CHEBI:15378"/>
        <dbReference type="ChEBI" id="CHEBI:29999"/>
        <dbReference type="ChEBI" id="CHEBI:30616"/>
        <dbReference type="ChEBI" id="CHEBI:83421"/>
        <dbReference type="ChEBI" id="CHEBI:456216"/>
        <dbReference type="EC" id="2.7.11.22"/>
    </reaction>
</comment>
<comment type="catalytic activity">
    <reaction>
        <text>L-threonyl-[protein] + ATP = O-phospho-L-threonyl-[protein] + ADP + H(+)</text>
        <dbReference type="Rhea" id="RHEA:46608"/>
        <dbReference type="Rhea" id="RHEA-COMP:11060"/>
        <dbReference type="Rhea" id="RHEA-COMP:11605"/>
        <dbReference type="ChEBI" id="CHEBI:15378"/>
        <dbReference type="ChEBI" id="CHEBI:30013"/>
        <dbReference type="ChEBI" id="CHEBI:30616"/>
        <dbReference type="ChEBI" id="CHEBI:61977"/>
        <dbReference type="ChEBI" id="CHEBI:456216"/>
        <dbReference type="EC" id="2.7.11.22"/>
    </reaction>
</comment>
<comment type="subunit">
    <text evidence="1">Interacts with a number of cyclins.</text>
</comment>
<comment type="similarity">
    <text evidence="5">Belongs to the protein kinase superfamily. CMGC Ser/Thr protein kinase family. CDC2/CDKX subfamily.</text>
</comment>
<proteinExistence type="inferred from homology"/>
<accession>Q6BRY2</accession>
<keyword id="KW-0067">ATP-binding</keyword>
<keyword id="KW-0418">Kinase</keyword>
<keyword id="KW-0547">Nucleotide-binding</keyword>
<keyword id="KW-1185">Reference proteome</keyword>
<keyword id="KW-0723">Serine/threonine-protein kinase</keyword>
<keyword id="KW-0808">Transferase</keyword>
<evidence type="ECO:0000250" key="1"/>
<evidence type="ECO:0000255" key="2">
    <source>
        <dbReference type="PROSITE-ProRule" id="PRU00159"/>
    </source>
</evidence>
<evidence type="ECO:0000255" key="3">
    <source>
        <dbReference type="PROSITE-ProRule" id="PRU10027"/>
    </source>
</evidence>
<evidence type="ECO:0000256" key="4">
    <source>
        <dbReference type="SAM" id="MobiDB-lite"/>
    </source>
</evidence>
<evidence type="ECO:0000305" key="5"/>
<protein>
    <recommendedName>
        <fullName>Negative regulator of the PHO system</fullName>
        <ecNumber>2.7.11.22</ecNumber>
    </recommendedName>
    <alternativeName>
        <fullName>Serine/threonine-protein kinase PHO85</fullName>
    </alternativeName>
</protein>
<sequence length="330" mass="37626">MTGSSSQFQQLEKLGEGTYATVYKGRNRTNGQLVALKEINLDSEEGTPSTAIREISLMKELDHENIVTLYDVIHTENKLTLVFEFMDKDLKKYMEAHGNQGALDLKIVKSFIFQLLKGIMFCHDNRVLHRDLKPQNLLINNKGELKLGDFGLARAFGIPFNTFSNEVVTLWYRAPDVLLGSRAYTASIDIWSAGCIFAEMCTGKPLFPGTSNDDQLIKIFRLMGTPNERTWPGVSSYANFKNNWQIFVPQDLRLLIPNLDSMGLNLLSSLLQMRPDARITARQALQHPWFHEISNPNPLMQHLADPYQQSQQQSQQQAQQSQQMDPQTYR</sequence>
<dbReference type="EC" id="2.7.11.22"/>
<dbReference type="EMBL" id="CR382136">
    <property type="protein sequence ID" value="CAG87206.2"/>
    <property type="molecule type" value="Genomic_DNA"/>
</dbReference>
<dbReference type="RefSeq" id="XP_459038.2">
    <property type="nucleotide sequence ID" value="XM_459038.1"/>
</dbReference>
<dbReference type="SMR" id="Q6BRY2"/>
<dbReference type="FunCoup" id="Q6BRY2">
    <property type="interactions" value="512"/>
</dbReference>
<dbReference type="STRING" id="284592.Q6BRY2"/>
<dbReference type="GeneID" id="2901523"/>
<dbReference type="KEGG" id="dha:DEHA2D12980g"/>
<dbReference type="VEuPathDB" id="FungiDB:DEHA2D12980g"/>
<dbReference type="eggNOG" id="KOG0594">
    <property type="taxonomic scope" value="Eukaryota"/>
</dbReference>
<dbReference type="HOGENOM" id="CLU_000288_181_1_1"/>
<dbReference type="InParanoid" id="Q6BRY2"/>
<dbReference type="OMA" id="NWQIFVP"/>
<dbReference type="OrthoDB" id="1732493at2759"/>
<dbReference type="Proteomes" id="UP000000599">
    <property type="component" value="Chromosome D"/>
</dbReference>
<dbReference type="GO" id="GO:0005935">
    <property type="term" value="C:cellular bud neck"/>
    <property type="evidence" value="ECO:0007669"/>
    <property type="project" value="EnsemblFungi"/>
</dbReference>
<dbReference type="GO" id="GO:0005737">
    <property type="term" value="C:cytoplasm"/>
    <property type="evidence" value="ECO:0007669"/>
    <property type="project" value="TreeGrafter"/>
</dbReference>
<dbReference type="GO" id="GO:0005634">
    <property type="term" value="C:nucleus"/>
    <property type="evidence" value="ECO:0007669"/>
    <property type="project" value="EnsemblFungi"/>
</dbReference>
<dbReference type="GO" id="GO:1990860">
    <property type="term" value="C:Pho85-Pho80 CDK-cyclin complex"/>
    <property type="evidence" value="ECO:0007669"/>
    <property type="project" value="EnsemblFungi"/>
</dbReference>
<dbReference type="GO" id="GO:0005524">
    <property type="term" value="F:ATP binding"/>
    <property type="evidence" value="ECO:0007669"/>
    <property type="project" value="UniProtKB-KW"/>
</dbReference>
<dbReference type="GO" id="GO:0004693">
    <property type="term" value="F:cyclin-dependent protein serine/threonine kinase activity"/>
    <property type="evidence" value="ECO:0007669"/>
    <property type="project" value="UniProtKB-EC"/>
</dbReference>
<dbReference type="GO" id="GO:0106310">
    <property type="term" value="F:protein serine kinase activity"/>
    <property type="evidence" value="ECO:0007669"/>
    <property type="project" value="RHEA"/>
</dbReference>
<dbReference type="GO" id="GO:0006974">
    <property type="term" value="P:DNA damage response"/>
    <property type="evidence" value="ECO:0007669"/>
    <property type="project" value="EnsemblFungi"/>
</dbReference>
<dbReference type="GO" id="GO:0030447">
    <property type="term" value="P:filamentous growth"/>
    <property type="evidence" value="ECO:0007669"/>
    <property type="project" value="UniProtKB-ARBA"/>
</dbReference>
<dbReference type="GO" id="GO:0000082">
    <property type="term" value="P:G1/S transition of mitotic cell cycle"/>
    <property type="evidence" value="ECO:0007669"/>
    <property type="project" value="EnsemblFungi"/>
</dbReference>
<dbReference type="GO" id="GO:0055088">
    <property type="term" value="P:lipid homeostasis"/>
    <property type="evidence" value="ECO:0007669"/>
    <property type="project" value="EnsemblFungi"/>
</dbReference>
<dbReference type="GO" id="GO:0050849">
    <property type="term" value="P:negative regulation of calcium-mediated signaling"/>
    <property type="evidence" value="ECO:0007669"/>
    <property type="project" value="EnsemblFungi"/>
</dbReference>
<dbReference type="GO" id="GO:0045719">
    <property type="term" value="P:negative regulation of glycogen biosynthetic process"/>
    <property type="evidence" value="ECO:0007669"/>
    <property type="project" value="EnsemblFungi"/>
</dbReference>
<dbReference type="GO" id="GO:0016242">
    <property type="term" value="P:negative regulation of macroautophagy"/>
    <property type="evidence" value="ECO:0007669"/>
    <property type="project" value="EnsemblFungi"/>
</dbReference>
<dbReference type="GO" id="GO:0045936">
    <property type="term" value="P:negative regulation of phosphate metabolic process"/>
    <property type="evidence" value="ECO:0007669"/>
    <property type="project" value="EnsemblFungi"/>
</dbReference>
<dbReference type="GO" id="GO:0000122">
    <property type="term" value="P:negative regulation of transcription by RNA polymerase II"/>
    <property type="evidence" value="ECO:0007669"/>
    <property type="project" value="EnsemblFungi"/>
</dbReference>
<dbReference type="GO" id="GO:0016239">
    <property type="term" value="P:positive regulation of macroautophagy"/>
    <property type="evidence" value="ECO:0007669"/>
    <property type="project" value="EnsemblFungi"/>
</dbReference>
<dbReference type="GO" id="GO:0071073">
    <property type="term" value="P:positive regulation of phospholipid biosynthetic process"/>
    <property type="evidence" value="ECO:0007669"/>
    <property type="project" value="EnsemblFungi"/>
</dbReference>
<dbReference type="GO" id="GO:0031648">
    <property type="term" value="P:protein destabilization"/>
    <property type="evidence" value="ECO:0007669"/>
    <property type="project" value="EnsemblFungi"/>
</dbReference>
<dbReference type="GO" id="GO:1901987">
    <property type="term" value="P:regulation of cell cycle phase transition"/>
    <property type="evidence" value="ECO:0007669"/>
    <property type="project" value="EnsemblFungi"/>
</dbReference>
<dbReference type="GO" id="GO:0051302">
    <property type="term" value="P:regulation of cell division"/>
    <property type="evidence" value="ECO:0007669"/>
    <property type="project" value="EnsemblFungi"/>
</dbReference>
<dbReference type="GO" id="GO:0032878">
    <property type="term" value="P:regulation of establishment or maintenance of cell polarity"/>
    <property type="evidence" value="ECO:0007669"/>
    <property type="project" value="EnsemblFungi"/>
</dbReference>
<dbReference type="GO" id="GO:0046822">
    <property type="term" value="P:regulation of nucleocytoplasmic transport"/>
    <property type="evidence" value="ECO:0007669"/>
    <property type="project" value="EnsemblFungi"/>
</dbReference>
<dbReference type="GO" id="GO:0032880">
    <property type="term" value="P:regulation of protein localization"/>
    <property type="evidence" value="ECO:0007669"/>
    <property type="project" value="EnsemblFungi"/>
</dbReference>
<dbReference type="FunFam" id="3.30.200.20:FF:000062">
    <property type="entry name" value="PHO system negative regulator"/>
    <property type="match status" value="1"/>
</dbReference>
<dbReference type="FunFam" id="1.10.510.10:FF:000410">
    <property type="entry name" value="Probable PHO85-cyclin-dependent protein kinase"/>
    <property type="match status" value="1"/>
</dbReference>
<dbReference type="Gene3D" id="3.30.200.20">
    <property type="entry name" value="Phosphorylase Kinase, domain 1"/>
    <property type="match status" value="1"/>
</dbReference>
<dbReference type="Gene3D" id="1.10.510.10">
    <property type="entry name" value="Transferase(Phosphotransferase) domain 1"/>
    <property type="match status" value="1"/>
</dbReference>
<dbReference type="InterPro" id="IPR050108">
    <property type="entry name" value="CDK"/>
</dbReference>
<dbReference type="InterPro" id="IPR011009">
    <property type="entry name" value="Kinase-like_dom_sf"/>
</dbReference>
<dbReference type="InterPro" id="IPR000719">
    <property type="entry name" value="Prot_kinase_dom"/>
</dbReference>
<dbReference type="InterPro" id="IPR017441">
    <property type="entry name" value="Protein_kinase_ATP_BS"/>
</dbReference>
<dbReference type="InterPro" id="IPR008271">
    <property type="entry name" value="Ser/Thr_kinase_AS"/>
</dbReference>
<dbReference type="PANTHER" id="PTHR24056">
    <property type="entry name" value="CELL DIVISION PROTEIN KINASE"/>
    <property type="match status" value="1"/>
</dbReference>
<dbReference type="PANTHER" id="PTHR24056:SF46">
    <property type="entry name" value="CYCLIN-DEPENDENT KINASE 5"/>
    <property type="match status" value="1"/>
</dbReference>
<dbReference type="Pfam" id="PF00069">
    <property type="entry name" value="Pkinase"/>
    <property type="match status" value="1"/>
</dbReference>
<dbReference type="SMART" id="SM00220">
    <property type="entry name" value="S_TKc"/>
    <property type="match status" value="1"/>
</dbReference>
<dbReference type="SUPFAM" id="SSF56112">
    <property type="entry name" value="Protein kinase-like (PK-like)"/>
    <property type="match status" value="1"/>
</dbReference>
<dbReference type="PROSITE" id="PS00107">
    <property type="entry name" value="PROTEIN_KINASE_ATP"/>
    <property type="match status" value="1"/>
</dbReference>
<dbReference type="PROSITE" id="PS50011">
    <property type="entry name" value="PROTEIN_KINASE_DOM"/>
    <property type="match status" value="1"/>
</dbReference>
<dbReference type="PROSITE" id="PS00108">
    <property type="entry name" value="PROTEIN_KINASE_ST"/>
    <property type="match status" value="1"/>
</dbReference>
<organism>
    <name type="scientific">Debaryomyces hansenii (strain ATCC 36239 / CBS 767 / BCRC 21394 / JCM 1990 / NBRC 0083 / IGC 2968)</name>
    <name type="common">Yeast</name>
    <name type="synonym">Torulaspora hansenii</name>
    <dbReference type="NCBI Taxonomy" id="284592"/>
    <lineage>
        <taxon>Eukaryota</taxon>
        <taxon>Fungi</taxon>
        <taxon>Dikarya</taxon>
        <taxon>Ascomycota</taxon>
        <taxon>Saccharomycotina</taxon>
        <taxon>Pichiomycetes</taxon>
        <taxon>Debaryomycetaceae</taxon>
        <taxon>Debaryomyces</taxon>
    </lineage>
</organism>